<sequence>MHIKPIIQGVVARSAHPYGCEQAVLQQIQYVKQANPIKSGPKRVLILGASSGFGLAARIALTFGGAQADTIGVSFERAPSETQTGSAGYYNNLFFKQHAEQAGRIAVNLEGDVFSVDMREQVIEAIETYFEGEVDLIIYSIASGMRRKPRSEKADPEFWRSAIKPIGEAVSGATLLLENDTWIETTLQPASEEEIEGTLRVMGGDDWENWIDTLINAESLAEGCKTIAFSYMGPDVTHPIYLDGTLGRAKIDLHQTSHALNLKLANFDGGAYAVVCKALVTKASVFIPGLSPYLLALYQVMKNKGTHEGCIEQMQRLFSDKLYGHSRIPLDSERLIRMDDWEMNPDTQVQVRERLQQMNASNFQQLGDYAGFKREFMQLNGFEFDQIDYSQSVDMHNFINKK</sequence>
<evidence type="ECO:0000255" key="1">
    <source>
        <dbReference type="HAMAP-Rule" id="MF_01838"/>
    </source>
</evidence>
<organism>
    <name type="scientific">Vibrio cholerae serotype O1 (strain ATCC 39315 / El Tor Inaba N16961)</name>
    <dbReference type="NCBI Taxonomy" id="243277"/>
    <lineage>
        <taxon>Bacteria</taxon>
        <taxon>Pseudomonadati</taxon>
        <taxon>Pseudomonadota</taxon>
        <taxon>Gammaproteobacteria</taxon>
        <taxon>Vibrionales</taxon>
        <taxon>Vibrionaceae</taxon>
        <taxon>Vibrio</taxon>
    </lineage>
</organism>
<name>FABV2_VIBCH</name>
<accession>Q9KLG0</accession>
<dbReference type="EC" id="1.3.1.9" evidence="1"/>
<dbReference type="EMBL" id="AE003853">
    <property type="protein sequence ID" value="AAF96682.1"/>
    <property type="molecule type" value="Genomic_DNA"/>
</dbReference>
<dbReference type="PIR" id="B82418">
    <property type="entry name" value="B82418"/>
</dbReference>
<dbReference type="RefSeq" id="NP_233170.1">
    <property type="nucleotide sequence ID" value="NC_002506.1"/>
</dbReference>
<dbReference type="SMR" id="Q9KLG0"/>
<dbReference type="STRING" id="243277.VC_A0784"/>
<dbReference type="DNASU" id="2612628"/>
<dbReference type="EnsemblBacteria" id="AAF96682">
    <property type="protein sequence ID" value="AAF96682"/>
    <property type="gene ID" value="VC_A0784"/>
</dbReference>
<dbReference type="KEGG" id="vch:VC_A0784"/>
<dbReference type="PATRIC" id="fig|243277.26.peg.3407"/>
<dbReference type="eggNOG" id="COG3007">
    <property type="taxonomic scope" value="Bacteria"/>
</dbReference>
<dbReference type="HOGENOM" id="CLU_057698_1_0_6"/>
<dbReference type="UniPathway" id="UPA00094"/>
<dbReference type="Proteomes" id="UP000000584">
    <property type="component" value="Chromosome 2"/>
</dbReference>
<dbReference type="GO" id="GO:0004318">
    <property type="term" value="F:enoyl-[acyl-carrier-protein] reductase (NADH) activity"/>
    <property type="evidence" value="ECO:0000318"/>
    <property type="project" value="GO_Central"/>
</dbReference>
<dbReference type="GO" id="GO:0051287">
    <property type="term" value="F:NAD binding"/>
    <property type="evidence" value="ECO:0000318"/>
    <property type="project" value="GO_Central"/>
</dbReference>
<dbReference type="GO" id="GO:0050343">
    <property type="term" value="F:trans-2-enoyl-CoA reductase (NADH) activity"/>
    <property type="evidence" value="ECO:0000318"/>
    <property type="project" value="GO_Central"/>
</dbReference>
<dbReference type="GO" id="GO:0006633">
    <property type="term" value="P:fatty acid biosynthetic process"/>
    <property type="evidence" value="ECO:0000318"/>
    <property type="project" value="GO_Central"/>
</dbReference>
<dbReference type="Gene3D" id="3.40.50.720">
    <property type="entry name" value="NAD(P)-binding Rossmann-like Domain"/>
    <property type="match status" value="1"/>
</dbReference>
<dbReference type="HAMAP" id="MF_01838">
    <property type="entry name" value="FabV_reductase"/>
    <property type="match status" value="1"/>
</dbReference>
<dbReference type="InterPro" id="IPR024906">
    <property type="entry name" value="Eno_Rdtase_FAD-bd_dom"/>
</dbReference>
<dbReference type="InterPro" id="IPR024910">
    <property type="entry name" value="Enoyl-CoA_Rdtase_cat_dom"/>
</dbReference>
<dbReference type="InterPro" id="IPR050048">
    <property type="entry name" value="FabV-like_NADH_b"/>
</dbReference>
<dbReference type="InterPro" id="IPR036291">
    <property type="entry name" value="NAD(P)-bd_dom_sf"/>
</dbReference>
<dbReference type="InterPro" id="IPR010758">
    <property type="entry name" value="Trans-2-enoyl-CoA_reductase"/>
</dbReference>
<dbReference type="NCBIfam" id="NF043048">
    <property type="entry name" value="EnoyACPredFabV"/>
    <property type="match status" value="1"/>
</dbReference>
<dbReference type="NCBIfam" id="NF010177">
    <property type="entry name" value="PRK13656.1"/>
    <property type="match status" value="1"/>
</dbReference>
<dbReference type="PANTHER" id="PTHR37480">
    <property type="entry name" value="ENOYL-[ACYL-CARRIER-PROTEIN] REDUCTASE [NADH]"/>
    <property type="match status" value="1"/>
</dbReference>
<dbReference type="PANTHER" id="PTHR37480:SF1">
    <property type="entry name" value="ENOYL-[ACYL-CARRIER-PROTEIN] REDUCTASE [NADH]"/>
    <property type="match status" value="1"/>
</dbReference>
<dbReference type="Pfam" id="PF07055">
    <property type="entry name" value="Eno-Rase_FAD_bd"/>
    <property type="match status" value="1"/>
</dbReference>
<dbReference type="Pfam" id="PF12242">
    <property type="entry name" value="Eno-Rase_NADH_b"/>
    <property type="match status" value="1"/>
</dbReference>
<dbReference type="Pfam" id="PF12241">
    <property type="entry name" value="Enoyl_reductase"/>
    <property type="match status" value="1"/>
</dbReference>
<dbReference type="SUPFAM" id="SSF51735">
    <property type="entry name" value="NAD(P)-binding Rossmann-fold domains"/>
    <property type="match status" value="1"/>
</dbReference>
<gene>
    <name evidence="1" type="primary">fabV2</name>
    <name type="ordered locus">VC_A0784</name>
</gene>
<protein>
    <recommendedName>
        <fullName evidence="1">Enoyl-[acyl-carrier-protein] reductase [NADH] 2</fullName>
        <shortName evidence="1">ENR 2</shortName>
        <ecNumber evidence="1">1.3.1.9</ecNumber>
    </recommendedName>
</protein>
<keyword id="KW-0275">Fatty acid biosynthesis</keyword>
<keyword id="KW-0276">Fatty acid metabolism</keyword>
<keyword id="KW-0444">Lipid biosynthesis</keyword>
<keyword id="KW-0443">Lipid metabolism</keyword>
<keyword id="KW-0520">NAD</keyword>
<keyword id="KW-0560">Oxidoreductase</keyword>
<keyword id="KW-1185">Reference proteome</keyword>
<comment type="function">
    <text evidence="1">Involved in the final reduction of the elongation cycle of fatty acid synthesis (FAS II). Catalyzes the reduction of a carbon-carbon double bond in an enoyl moiety that is covalently linked to an acyl carrier protein (ACP).</text>
</comment>
<comment type="catalytic activity">
    <reaction evidence="1">
        <text>a 2,3-saturated acyl-[ACP] + NAD(+) = a (2E)-enoyl-[ACP] + NADH + H(+)</text>
        <dbReference type="Rhea" id="RHEA:10240"/>
        <dbReference type="Rhea" id="RHEA-COMP:9925"/>
        <dbReference type="Rhea" id="RHEA-COMP:9926"/>
        <dbReference type="ChEBI" id="CHEBI:15378"/>
        <dbReference type="ChEBI" id="CHEBI:57540"/>
        <dbReference type="ChEBI" id="CHEBI:57945"/>
        <dbReference type="ChEBI" id="CHEBI:78784"/>
        <dbReference type="ChEBI" id="CHEBI:78785"/>
        <dbReference type="EC" id="1.3.1.9"/>
    </reaction>
</comment>
<comment type="pathway">
    <text evidence="1">Lipid metabolism; fatty acid biosynthesis.</text>
</comment>
<comment type="subunit">
    <text evidence="1">Monomer.</text>
</comment>
<comment type="similarity">
    <text evidence="1">Belongs to the TER reductase family.</text>
</comment>
<proteinExistence type="inferred from homology"/>
<feature type="chain" id="PRO_0000220051" description="Enoyl-[acyl-carrier-protein] reductase [NADH] 2">
    <location>
        <begin position="1"/>
        <end position="402"/>
    </location>
</feature>
<feature type="active site" description="Proton donor" evidence="1">
    <location>
        <position position="241"/>
    </location>
</feature>
<feature type="binding site" evidence="1">
    <location>
        <begin position="48"/>
        <end position="53"/>
    </location>
    <ligand>
        <name>NAD(+)</name>
        <dbReference type="ChEBI" id="CHEBI:57540"/>
    </ligand>
</feature>
<feature type="binding site" evidence="1">
    <location>
        <begin position="75"/>
        <end position="76"/>
    </location>
    <ligand>
        <name>NAD(+)</name>
        <dbReference type="ChEBI" id="CHEBI:57540"/>
    </ligand>
</feature>
<feature type="binding site" evidence="1">
    <location>
        <begin position="112"/>
        <end position="113"/>
    </location>
    <ligand>
        <name>NAD(+)</name>
        <dbReference type="ChEBI" id="CHEBI:57540"/>
    </ligand>
</feature>
<feature type="binding site" evidence="1">
    <location>
        <begin position="141"/>
        <end position="142"/>
    </location>
    <ligand>
        <name>NAD(+)</name>
        <dbReference type="ChEBI" id="CHEBI:57540"/>
    </ligand>
</feature>
<feature type="binding site" evidence="1">
    <location>
        <position position="231"/>
    </location>
    <ligand>
        <name>substrate</name>
    </ligand>
</feature>
<feature type="binding site" evidence="1">
    <location>
        <position position="250"/>
    </location>
    <ligand>
        <name>NAD(+)</name>
        <dbReference type="ChEBI" id="CHEBI:57540"/>
    </ligand>
</feature>
<feature type="binding site" evidence="1">
    <location>
        <begin position="279"/>
        <end position="281"/>
    </location>
    <ligand>
        <name>NAD(+)</name>
        <dbReference type="ChEBI" id="CHEBI:57540"/>
    </ligand>
</feature>
<feature type="site" description="Plays an important role in discriminating NADH against NADPH" evidence="1">
    <location>
        <position position="76"/>
    </location>
</feature>
<reference key="1">
    <citation type="journal article" date="2000" name="Nature">
        <title>DNA sequence of both chromosomes of the cholera pathogen Vibrio cholerae.</title>
        <authorList>
            <person name="Heidelberg J.F."/>
            <person name="Eisen J.A."/>
            <person name="Nelson W.C."/>
            <person name="Clayton R.A."/>
            <person name="Gwinn M.L."/>
            <person name="Dodson R.J."/>
            <person name="Haft D.H."/>
            <person name="Hickey E.K."/>
            <person name="Peterson J.D."/>
            <person name="Umayam L.A."/>
            <person name="Gill S.R."/>
            <person name="Nelson K.E."/>
            <person name="Read T.D."/>
            <person name="Tettelin H."/>
            <person name="Richardson D.L."/>
            <person name="Ermolaeva M.D."/>
            <person name="Vamathevan J.J."/>
            <person name="Bass S."/>
            <person name="Qin H."/>
            <person name="Dragoi I."/>
            <person name="Sellers P."/>
            <person name="McDonald L.A."/>
            <person name="Utterback T.R."/>
            <person name="Fleischmann R.D."/>
            <person name="Nierman W.C."/>
            <person name="White O."/>
            <person name="Salzberg S.L."/>
            <person name="Smith H.O."/>
            <person name="Colwell R.R."/>
            <person name="Mekalanos J.J."/>
            <person name="Venter J.C."/>
            <person name="Fraser C.M."/>
        </authorList>
    </citation>
    <scope>NUCLEOTIDE SEQUENCE [LARGE SCALE GENOMIC DNA]</scope>
    <source>
        <strain>ATCC 39315 / El Tor Inaba N16961</strain>
    </source>
</reference>